<comment type="similarity">
    <text evidence="1">Belongs to the bacterial ribosomal protein bS21 family.</text>
</comment>
<keyword id="KW-0687">Ribonucleoprotein</keyword>
<keyword id="KW-0689">Ribosomal protein</keyword>
<evidence type="ECO:0000255" key="1">
    <source>
        <dbReference type="HAMAP-Rule" id="MF_00358"/>
    </source>
</evidence>
<evidence type="ECO:0000256" key="2">
    <source>
        <dbReference type="SAM" id="MobiDB-lite"/>
    </source>
</evidence>
<evidence type="ECO:0000305" key="3"/>
<feature type="chain" id="PRO_1000120593" description="Small ribosomal subunit protein bS21">
    <location>
        <begin position="1"/>
        <end position="70"/>
    </location>
</feature>
<feature type="region of interest" description="Disordered" evidence="2">
    <location>
        <begin position="40"/>
        <end position="70"/>
    </location>
</feature>
<feature type="compositionally biased region" description="Basic residues" evidence="2">
    <location>
        <begin position="45"/>
        <end position="61"/>
    </location>
</feature>
<protein>
    <recommendedName>
        <fullName evidence="1">Small ribosomal subunit protein bS21</fullName>
    </recommendedName>
    <alternativeName>
        <fullName evidence="3">30S ribosomal protein S21</fullName>
    </alternativeName>
</protein>
<name>RS21_BORPD</name>
<proteinExistence type="inferred from homology"/>
<accession>A9IK87</accession>
<gene>
    <name evidence="1" type="primary">rpsU</name>
    <name type="ordered locus">Bpet2033</name>
</gene>
<organism>
    <name type="scientific">Bordetella petrii (strain ATCC BAA-461 / DSM 12804 / CCUG 43448)</name>
    <dbReference type="NCBI Taxonomy" id="340100"/>
    <lineage>
        <taxon>Bacteria</taxon>
        <taxon>Pseudomonadati</taxon>
        <taxon>Pseudomonadota</taxon>
        <taxon>Betaproteobacteria</taxon>
        <taxon>Burkholderiales</taxon>
        <taxon>Alcaligenaceae</taxon>
        <taxon>Bordetella</taxon>
    </lineage>
</organism>
<dbReference type="EMBL" id="AM902716">
    <property type="protein sequence ID" value="CAP42373.1"/>
    <property type="molecule type" value="Genomic_DNA"/>
</dbReference>
<dbReference type="SMR" id="A9IK87"/>
<dbReference type="STRING" id="94624.Bpet2033"/>
<dbReference type="KEGG" id="bpt:Bpet2033"/>
<dbReference type="eggNOG" id="COG0828">
    <property type="taxonomic scope" value="Bacteria"/>
</dbReference>
<dbReference type="Proteomes" id="UP000001225">
    <property type="component" value="Chromosome"/>
</dbReference>
<dbReference type="GO" id="GO:1990904">
    <property type="term" value="C:ribonucleoprotein complex"/>
    <property type="evidence" value="ECO:0007669"/>
    <property type="project" value="UniProtKB-KW"/>
</dbReference>
<dbReference type="GO" id="GO:0005840">
    <property type="term" value="C:ribosome"/>
    <property type="evidence" value="ECO:0007669"/>
    <property type="project" value="UniProtKB-KW"/>
</dbReference>
<dbReference type="GO" id="GO:0003735">
    <property type="term" value="F:structural constituent of ribosome"/>
    <property type="evidence" value="ECO:0007669"/>
    <property type="project" value="InterPro"/>
</dbReference>
<dbReference type="GO" id="GO:0006412">
    <property type="term" value="P:translation"/>
    <property type="evidence" value="ECO:0007669"/>
    <property type="project" value="UniProtKB-UniRule"/>
</dbReference>
<dbReference type="Gene3D" id="1.20.5.1150">
    <property type="entry name" value="Ribosomal protein S8"/>
    <property type="match status" value="1"/>
</dbReference>
<dbReference type="HAMAP" id="MF_00358">
    <property type="entry name" value="Ribosomal_bS21"/>
    <property type="match status" value="1"/>
</dbReference>
<dbReference type="InterPro" id="IPR001911">
    <property type="entry name" value="Ribosomal_bS21"/>
</dbReference>
<dbReference type="InterPro" id="IPR018278">
    <property type="entry name" value="Ribosomal_bS21_CS"/>
</dbReference>
<dbReference type="InterPro" id="IPR038380">
    <property type="entry name" value="Ribosomal_bS21_sf"/>
</dbReference>
<dbReference type="NCBIfam" id="TIGR00030">
    <property type="entry name" value="S21p"/>
    <property type="match status" value="1"/>
</dbReference>
<dbReference type="PANTHER" id="PTHR21109">
    <property type="entry name" value="MITOCHONDRIAL 28S RIBOSOMAL PROTEIN S21"/>
    <property type="match status" value="1"/>
</dbReference>
<dbReference type="PANTHER" id="PTHR21109:SF22">
    <property type="entry name" value="SMALL RIBOSOMAL SUBUNIT PROTEIN BS21"/>
    <property type="match status" value="1"/>
</dbReference>
<dbReference type="Pfam" id="PF01165">
    <property type="entry name" value="Ribosomal_S21"/>
    <property type="match status" value="1"/>
</dbReference>
<dbReference type="PRINTS" id="PR00976">
    <property type="entry name" value="RIBOSOMALS21"/>
</dbReference>
<dbReference type="PROSITE" id="PS01181">
    <property type="entry name" value="RIBOSOMAL_S21"/>
    <property type="match status" value="1"/>
</dbReference>
<sequence length="70" mass="8535">MPIVRLKENEPFEAALRRFKRTIEKTGLLTELRSREFYEKPTAERKRKHAAAVKRHYKRIRSQQLPPRLY</sequence>
<reference key="1">
    <citation type="journal article" date="2008" name="BMC Genomics">
        <title>The missing link: Bordetella petrii is endowed with both the metabolic versatility of environmental bacteria and virulence traits of pathogenic Bordetellae.</title>
        <authorList>
            <person name="Gross R."/>
            <person name="Guzman C.A."/>
            <person name="Sebaihia M."/>
            <person name="Martin dos Santos V.A.P."/>
            <person name="Pieper D.H."/>
            <person name="Koebnik R."/>
            <person name="Lechner M."/>
            <person name="Bartels D."/>
            <person name="Buhrmester J."/>
            <person name="Choudhuri J.V."/>
            <person name="Ebensen T."/>
            <person name="Gaigalat L."/>
            <person name="Herrmann S."/>
            <person name="Khachane A.N."/>
            <person name="Larisch C."/>
            <person name="Link S."/>
            <person name="Linke B."/>
            <person name="Meyer F."/>
            <person name="Mormann S."/>
            <person name="Nakunst D."/>
            <person name="Rueckert C."/>
            <person name="Schneiker-Bekel S."/>
            <person name="Schulze K."/>
            <person name="Voerholter F.-J."/>
            <person name="Yevsa T."/>
            <person name="Engle J.T."/>
            <person name="Goldman W.E."/>
            <person name="Puehler A."/>
            <person name="Goebel U.B."/>
            <person name="Goesmann A."/>
            <person name="Bloecker H."/>
            <person name="Kaiser O."/>
            <person name="Martinez-Arias R."/>
        </authorList>
    </citation>
    <scope>NUCLEOTIDE SEQUENCE [LARGE SCALE GENOMIC DNA]</scope>
    <source>
        <strain>ATCC BAA-461 / DSM 12804 / CCUG 43448</strain>
    </source>
</reference>